<feature type="chain" id="PRO_1000046724" description="UPF0302 protein BCE_1647">
    <location>
        <begin position="1"/>
        <end position="178"/>
    </location>
</feature>
<accession>Q73AX5</accession>
<gene>
    <name type="ordered locus">BCE_1647</name>
</gene>
<protein>
    <recommendedName>
        <fullName evidence="1">UPF0302 protein BCE_1647</fullName>
    </recommendedName>
</protein>
<reference key="1">
    <citation type="journal article" date="2004" name="Nucleic Acids Res.">
        <title>The genome sequence of Bacillus cereus ATCC 10987 reveals metabolic adaptations and a large plasmid related to Bacillus anthracis pXO1.</title>
        <authorList>
            <person name="Rasko D.A."/>
            <person name="Ravel J."/>
            <person name="Oekstad O.A."/>
            <person name="Helgason E."/>
            <person name="Cer R.Z."/>
            <person name="Jiang L."/>
            <person name="Shores K.A."/>
            <person name="Fouts D.E."/>
            <person name="Tourasse N.J."/>
            <person name="Angiuoli S.V."/>
            <person name="Kolonay J.F."/>
            <person name="Nelson W.C."/>
            <person name="Kolstoe A.-B."/>
            <person name="Fraser C.M."/>
            <person name="Read T.D."/>
        </authorList>
    </citation>
    <scope>NUCLEOTIDE SEQUENCE [LARGE SCALE GENOMIC DNA]</scope>
    <source>
        <strain>ATCC 10987 / NRS 248</strain>
    </source>
</reference>
<organism>
    <name type="scientific">Bacillus cereus (strain ATCC 10987 / NRS 248)</name>
    <dbReference type="NCBI Taxonomy" id="222523"/>
    <lineage>
        <taxon>Bacteria</taxon>
        <taxon>Bacillati</taxon>
        <taxon>Bacillota</taxon>
        <taxon>Bacilli</taxon>
        <taxon>Bacillales</taxon>
        <taxon>Bacillaceae</taxon>
        <taxon>Bacillus</taxon>
        <taxon>Bacillus cereus group</taxon>
    </lineage>
</organism>
<name>Y1647_BACC1</name>
<evidence type="ECO:0000255" key="1">
    <source>
        <dbReference type="HAMAP-Rule" id="MF_00760"/>
    </source>
</evidence>
<proteinExistence type="inferred from homology"/>
<dbReference type="EMBL" id="AE017194">
    <property type="protein sequence ID" value="AAS40576.1"/>
    <property type="molecule type" value="Genomic_DNA"/>
</dbReference>
<dbReference type="SMR" id="Q73AX5"/>
<dbReference type="KEGG" id="bca:BCE_1647"/>
<dbReference type="HOGENOM" id="CLU_126019_0_0_9"/>
<dbReference type="Proteomes" id="UP000002527">
    <property type="component" value="Chromosome"/>
</dbReference>
<dbReference type="Gene3D" id="3.40.1530.30">
    <property type="entry name" value="Uncharacterised family UPF0302, N-terminal domain"/>
    <property type="match status" value="1"/>
</dbReference>
<dbReference type="Gene3D" id="4.10.810.10">
    <property type="entry name" value="Virus Scaffolding Protein, Chain A"/>
    <property type="match status" value="1"/>
</dbReference>
<dbReference type="HAMAP" id="MF_00760">
    <property type="entry name" value="UPF0302"/>
    <property type="match status" value="1"/>
</dbReference>
<dbReference type="InterPro" id="IPR014957">
    <property type="entry name" value="IDEAL_dom"/>
</dbReference>
<dbReference type="InterPro" id="IPR011188">
    <property type="entry name" value="UPF0302"/>
</dbReference>
<dbReference type="InterPro" id="IPR014963">
    <property type="entry name" value="UPF0302_N"/>
</dbReference>
<dbReference type="InterPro" id="IPR038091">
    <property type="entry name" value="UPF0302_N_sf"/>
</dbReference>
<dbReference type="InterPro" id="IPR027393">
    <property type="entry name" value="Virus_scaffolding_prot_C"/>
</dbReference>
<dbReference type="NCBIfam" id="NF002965">
    <property type="entry name" value="PRK03636.1"/>
    <property type="match status" value="1"/>
</dbReference>
<dbReference type="Pfam" id="PF08858">
    <property type="entry name" value="IDEAL"/>
    <property type="match status" value="1"/>
</dbReference>
<dbReference type="Pfam" id="PF08864">
    <property type="entry name" value="UPF0302"/>
    <property type="match status" value="1"/>
</dbReference>
<dbReference type="PIRSF" id="PIRSF007165">
    <property type="entry name" value="UCP007165"/>
    <property type="match status" value="1"/>
</dbReference>
<dbReference type="SMART" id="SM00914">
    <property type="entry name" value="IDEAL"/>
    <property type="match status" value="1"/>
</dbReference>
<comment type="similarity">
    <text evidence="1">Belongs to the UPF0302 family.</text>
</comment>
<sequence length="178" mass="21432">MNTPVSVNEKKDFVKWFLNNYQLKQRECVWILNYLMSHDQLMHKVHFVEHAKYCPRGLVMSANCVKDTPFHFFKQNVMTTDAEKSFHDIRLNRDEDIYIQLNFKSSFQNANYVAVLEENPYLPKHIEVNEKDRLLAERFLEESVFSFRRERLLKQIDEALDKQDKEAFHRLTAELKML</sequence>